<gene>
    <name type="primary">LMNB1</name>
</gene>
<proteinExistence type="evidence at protein level"/>
<protein>
    <recommendedName>
        <fullName>Lamin-B1</fullName>
    </recommendedName>
</protein>
<dbReference type="EMBL" id="X16878">
    <property type="protein sequence ID" value="CAA34761.1"/>
    <property type="molecule type" value="mRNA"/>
</dbReference>
<dbReference type="PIR" id="S05518">
    <property type="entry name" value="S05518"/>
</dbReference>
<dbReference type="RefSeq" id="NP_990617.1">
    <property type="nucleotide sequence ID" value="NM_205286.1"/>
</dbReference>
<dbReference type="SMR" id="P14731"/>
<dbReference type="BioGRID" id="676483">
    <property type="interactions" value="1"/>
</dbReference>
<dbReference type="FunCoup" id="P14731">
    <property type="interactions" value="2077"/>
</dbReference>
<dbReference type="STRING" id="9031.ENSGALP00000023635"/>
<dbReference type="PaxDb" id="9031-ENSGALP00000023635"/>
<dbReference type="GeneID" id="396223"/>
<dbReference type="KEGG" id="gga:396223"/>
<dbReference type="CTD" id="4001"/>
<dbReference type="VEuPathDB" id="HostDB:geneid_396223"/>
<dbReference type="eggNOG" id="KOG0977">
    <property type="taxonomic scope" value="Eukaryota"/>
</dbReference>
<dbReference type="InParanoid" id="P14731"/>
<dbReference type="OrthoDB" id="102442at2759"/>
<dbReference type="PhylomeDB" id="P14731"/>
<dbReference type="PRO" id="PR:P14731"/>
<dbReference type="Proteomes" id="UP000000539">
    <property type="component" value="Unassembled WGS sequence"/>
</dbReference>
<dbReference type="GO" id="GO:0005882">
    <property type="term" value="C:intermediate filament"/>
    <property type="evidence" value="ECO:0007669"/>
    <property type="project" value="UniProtKB-KW"/>
</dbReference>
<dbReference type="GO" id="GO:0005635">
    <property type="term" value="C:nuclear envelope"/>
    <property type="evidence" value="ECO:0000318"/>
    <property type="project" value="GO_Central"/>
</dbReference>
<dbReference type="GO" id="GO:0005652">
    <property type="term" value="C:nuclear lamina"/>
    <property type="evidence" value="ECO:0000314"/>
    <property type="project" value="UniProtKB"/>
</dbReference>
<dbReference type="GO" id="GO:0016363">
    <property type="term" value="C:nuclear matrix"/>
    <property type="evidence" value="ECO:0007669"/>
    <property type="project" value="UniProtKB-SubCell"/>
</dbReference>
<dbReference type="GO" id="GO:0005654">
    <property type="term" value="C:nucleoplasm"/>
    <property type="evidence" value="ECO:0007669"/>
    <property type="project" value="UniProtKB-SubCell"/>
</dbReference>
<dbReference type="GO" id="GO:0005200">
    <property type="term" value="F:structural constituent of cytoskeleton"/>
    <property type="evidence" value="ECO:0000314"/>
    <property type="project" value="UniProtKB"/>
</dbReference>
<dbReference type="GO" id="GO:0031507">
    <property type="term" value="P:heterochromatin formation"/>
    <property type="evidence" value="ECO:0000318"/>
    <property type="project" value="GO_Central"/>
</dbReference>
<dbReference type="GO" id="GO:0006998">
    <property type="term" value="P:nuclear envelope organization"/>
    <property type="evidence" value="ECO:0000250"/>
    <property type="project" value="UniProtKB"/>
</dbReference>
<dbReference type="GO" id="GO:0007097">
    <property type="term" value="P:nuclear migration"/>
    <property type="evidence" value="ECO:0000318"/>
    <property type="project" value="GO_Central"/>
</dbReference>
<dbReference type="GO" id="GO:0051664">
    <property type="term" value="P:nuclear pore localization"/>
    <property type="evidence" value="ECO:0000318"/>
    <property type="project" value="GO_Central"/>
</dbReference>
<dbReference type="GO" id="GO:0090435">
    <property type="term" value="P:protein localization to nuclear envelope"/>
    <property type="evidence" value="ECO:0000318"/>
    <property type="project" value="GO_Central"/>
</dbReference>
<dbReference type="FunFam" id="1.20.5.1160:FF:000007">
    <property type="entry name" value="Lamin B1"/>
    <property type="match status" value="1"/>
</dbReference>
<dbReference type="FunFam" id="2.60.40.1260:FF:000002">
    <property type="entry name" value="Lamin B1"/>
    <property type="match status" value="1"/>
</dbReference>
<dbReference type="Gene3D" id="1.20.5.170">
    <property type="match status" value="1"/>
</dbReference>
<dbReference type="Gene3D" id="2.60.40.1260">
    <property type="entry name" value="Lamin Tail domain"/>
    <property type="match status" value="1"/>
</dbReference>
<dbReference type="Gene3D" id="1.20.5.1160">
    <property type="entry name" value="Vasodilator-stimulated phosphoprotein"/>
    <property type="match status" value="1"/>
</dbReference>
<dbReference type="InterPro" id="IPR018039">
    <property type="entry name" value="IF_conserved"/>
</dbReference>
<dbReference type="InterPro" id="IPR039008">
    <property type="entry name" value="IF_rod_dom"/>
</dbReference>
<dbReference type="InterPro" id="IPR001322">
    <property type="entry name" value="Lamin_tail_dom"/>
</dbReference>
<dbReference type="InterPro" id="IPR036415">
    <property type="entry name" value="Lamin_tail_dom_sf"/>
</dbReference>
<dbReference type="PANTHER" id="PTHR45721">
    <property type="entry name" value="LAMIN DM0-RELATED"/>
    <property type="match status" value="1"/>
</dbReference>
<dbReference type="PANTHER" id="PTHR45721:SF3">
    <property type="entry name" value="LAMIN-B1"/>
    <property type="match status" value="1"/>
</dbReference>
<dbReference type="Pfam" id="PF00038">
    <property type="entry name" value="Filament"/>
    <property type="match status" value="1"/>
</dbReference>
<dbReference type="Pfam" id="PF00932">
    <property type="entry name" value="LTD"/>
    <property type="match status" value="1"/>
</dbReference>
<dbReference type="SMART" id="SM01391">
    <property type="entry name" value="Filament"/>
    <property type="match status" value="1"/>
</dbReference>
<dbReference type="SUPFAM" id="SSF64593">
    <property type="entry name" value="Intermediate filament protein, coiled coil region"/>
    <property type="match status" value="2"/>
</dbReference>
<dbReference type="SUPFAM" id="SSF74853">
    <property type="entry name" value="Lamin A/C globular tail domain"/>
    <property type="match status" value="1"/>
</dbReference>
<dbReference type="PROSITE" id="PS00226">
    <property type="entry name" value="IF_ROD_1"/>
    <property type="match status" value="1"/>
</dbReference>
<dbReference type="PROSITE" id="PS51842">
    <property type="entry name" value="IF_ROD_2"/>
    <property type="match status" value="1"/>
</dbReference>
<dbReference type="PROSITE" id="PS51841">
    <property type="entry name" value="LTD"/>
    <property type="match status" value="1"/>
</dbReference>
<evidence type="ECO:0000250" key="1">
    <source>
        <dbReference type="UniProtKB" id="P02545"/>
    </source>
</evidence>
<evidence type="ECO:0000250" key="2">
    <source>
        <dbReference type="UniProtKB" id="P14732"/>
    </source>
</evidence>
<evidence type="ECO:0000250" key="3">
    <source>
        <dbReference type="UniProtKB" id="P20700"/>
    </source>
</evidence>
<evidence type="ECO:0000255" key="4"/>
<evidence type="ECO:0000255" key="5">
    <source>
        <dbReference type="PROSITE-ProRule" id="PRU01187"/>
    </source>
</evidence>
<evidence type="ECO:0000255" key="6">
    <source>
        <dbReference type="PROSITE-ProRule" id="PRU01188"/>
    </source>
</evidence>
<evidence type="ECO:0000256" key="7">
    <source>
        <dbReference type="SAM" id="MobiDB-lite"/>
    </source>
</evidence>
<evidence type="ECO:0000269" key="8">
    <source>
    </source>
</evidence>
<sequence length="584" mass="66530">MAAAVAPLSPQPRGAAASAALSPTRISRLQEKEELRQLNDRLAVYIDKVRSLETENSALQRRVSEREQVCGREISGLKELFETELADARKTLDDTARERAKLQIELGKLRAEHEQVLSSYAKKDSDLNAAQVKLREFEAALNAKEAALATALGDKRSQEEELEDLRDQIAQLEVSLAAAKKELADETLQKVDLENRCQSLIEDLEFRKNVYEEEIKETRRKHETRLVEVDSGRQIEYEYKLAQALKEIREQHDAQVKLYKEELEQTYSSKLENIRQSSEMHSCTANTVREELHESRMRIETLSSHIADIQKESRAWQDRVHELEDTLSKERENYRKILAENEREVAEMRNQMQQQFSDYEQLLDVKLALDMEISAYRKLLESEEERLRLSPGPSSRVTVSRASSSRSVRTTRGKRKRIDVEESEASSSVSISHSASATGNISIEEIDVDGKFIRLKNTSEQDQPMGGWEMIRKIGDTSASYRYTSRYVLKAGQTVTIWAANAGVTASPPTDLIWKNQNSWGTGEDVKVVLKNSQGEEVAQRSTVFKTTVNEGEEEEEEGEEEILEDVIHQQGSPRKPERSCVVM</sequence>
<feature type="chain" id="PRO_0000063819" description="Lamin-B1">
    <location>
        <begin position="1"/>
        <end position="581"/>
    </location>
</feature>
<feature type="propeptide" id="PRO_0000403469" description="Removed in mature form" evidence="3">
    <location>
        <begin position="582"/>
        <end position="584"/>
    </location>
</feature>
<feature type="domain" description="IF rod" evidence="6">
    <location>
        <begin position="31"/>
        <end position="387"/>
    </location>
</feature>
<feature type="domain" description="LTD" evidence="5">
    <location>
        <begin position="429"/>
        <end position="545"/>
    </location>
</feature>
<feature type="region of interest" description="Disordered" evidence="7">
    <location>
        <begin position="1"/>
        <end position="22"/>
    </location>
</feature>
<feature type="region of interest" description="Head">
    <location>
        <begin position="2"/>
        <end position="33"/>
    </location>
</feature>
<feature type="region of interest" description="Coil 1A">
    <location>
        <begin position="34"/>
        <end position="70"/>
    </location>
</feature>
<feature type="region of interest" description="Coil 1B">
    <location>
        <begin position="81"/>
        <end position="218"/>
    </location>
</feature>
<feature type="region of interest" description="Coil 2">
    <location>
        <begin position="243"/>
        <end position="385"/>
    </location>
</feature>
<feature type="region of interest" description="Tail">
    <location>
        <begin position="386"/>
        <end position="584"/>
    </location>
</feature>
<feature type="region of interest" description="Disordered" evidence="7">
    <location>
        <begin position="388"/>
        <end position="431"/>
    </location>
</feature>
<feature type="region of interest" description="Disordered" evidence="7">
    <location>
        <begin position="548"/>
        <end position="584"/>
    </location>
</feature>
<feature type="short sequence motif" description="Nuclear localization signal" evidence="4">
    <location>
        <begin position="414"/>
        <end position="419"/>
    </location>
</feature>
<feature type="compositionally biased region" description="Low complexity" evidence="7">
    <location>
        <begin position="394"/>
        <end position="408"/>
    </location>
</feature>
<feature type="compositionally biased region" description="Acidic residues" evidence="7">
    <location>
        <begin position="551"/>
        <end position="565"/>
    </location>
</feature>
<feature type="compositionally biased region" description="Basic and acidic residues" evidence="7">
    <location>
        <begin position="575"/>
        <end position="584"/>
    </location>
</feature>
<feature type="modified residue" description="Phosphoserine" evidence="2">
    <location>
        <position position="22"/>
    </location>
</feature>
<feature type="modified residue" description="Cysteine methyl ester" evidence="3">
    <location>
        <position position="581"/>
    </location>
</feature>
<feature type="lipid moiety-binding region" description="S-farnesyl cysteine" evidence="3">
    <location>
        <position position="581"/>
    </location>
</feature>
<reference key="1">
    <citation type="journal article" date="1989" name="J. Mol. Biol.">
        <title>Cloning and sequencing of cDNA clones encoding chicken lamins A and B1 and comparison of the primary structures of vertebrate A- and B-type lamins.</title>
        <authorList>
            <person name="Peter M."/>
            <person name="Kitten G.T."/>
            <person name="Lehner C.F."/>
            <person name="Vorburger K."/>
            <person name="Bailer S.M."/>
            <person name="Maridor G."/>
            <person name="Nigg E.A."/>
        </authorList>
    </citation>
    <scope>NUCLEOTIDE SEQUENCE [MRNA]</scope>
</reference>
<reference key="2">
    <citation type="journal article" date="1990" name="Cell">
        <title>In vitro disassembly of the nuclear lamina and M phase-specific phosphorylation of lamins by cdc2 kinase.</title>
        <authorList>
            <person name="Peter M."/>
            <person name="Nakagawa J."/>
            <person name="Doree M."/>
            <person name="Labbe J.C."/>
            <person name="Nigg E.A."/>
        </authorList>
    </citation>
    <scope>FUNCTION</scope>
    <scope>SUBCELLULAR LOCATION</scope>
    <scope>PHOSPHORYLATION</scope>
</reference>
<keyword id="KW-0175">Coiled coil</keyword>
<keyword id="KW-0403">Intermediate filament</keyword>
<keyword id="KW-0449">Lipoprotein</keyword>
<keyword id="KW-0488">Methylation</keyword>
<keyword id="KW-0539">Nucleus</keyword>
<keyword id="KW-0597">Phosphoprotein</keyword>
<keyword id="KW-0636">Prenylation</keyword>
<keyword id="KW-1185">Reference proteome</keyword>
<organism>
    <name type="scientific">Gallus gallus</name>
    <name type="common">Chicken</name>
    <dbReference type="NCBI Taxonomy" id="9031"/>
    <lineage>
        <taxon>Eukaryota</taxon>
        <taxon>Metazoa</taxon>
        <taxon>Chordata</taxon>
        <taxon>Craniata</taxon>
        <taxon>Vertebrata</taxon>
        <taxon>Euteleostomi</taxon>
        <taxon>Archelosauria</taxon>
        <taxon>Archosauria</taxon>
        <taxon>Dinosauria</taxon>
        <taxon>Saurischia</taxon>
        <taxon>Theropoda</taxon>
        <taxon>Coelurosauria</taxon>
        <taxon>Aves</taxon>
        <taxon>Neognathae</taxon>
        <taxon>Galloanserae</taxon>
        <taxon>Galliformes</taxon>
        <taxon>Phasianidae</taxon>
        <taxon>Phasianinae</taxon>
        <taxon>Gallus</taxon>
    </lineage>
</organism>
<accession>P14731</accession>
<comment type="function">
    <text evidence="1 8">Lamins are intermediate filament proteins that assemble into a filamentous meshwork, and which constitute the major components of the nuclear lamina, a fibrous layer on the nucleoplasmic side of the inner nuclear membrane (PubMed:2188731). Lamins provide a framework for the nuclear envelope, bridging the nuclear envelope and chromatin (By similarity). Plays an important role in nuclear assembly, chromatin organization, nuclear membrane and telomere dynamics (By similarity).</text>
</comment>
<comment type="subunit">
    <text evidence="1">Homodimer (By similarity). Lamin dimers then assemble into dimeric head-to-tail polymers (By similarity). Ultimately, two head-to-tail polymers assemble laterally into a protofilament with a uniformly shaped rod of 3.5 nm in diameter (By similarity).</text>
</comment>
<comment type="subcellular location">
    <subcellularLocation>
        <location evidence="8">Nucleus lamina</location>
    </subcellularLocation>
    <subcellularLocation>
        <location evidence="1">Nucleus envelope</location>
    </subcellularLocation>
    <subcellularLocation>
        <location evidence="1">Nucleus</location>
        <location evidence="1">Nucleoplasm</location>
    </subcellularLocation>
    <subcellularLocation>
        <location evidence="1">Nucleus matrix</location>
    </subcellularLocation>
</comment>
<comment type="PTM">
    <text evidence="2 8">Phosphorylation plays a key role in lamin organization, subcellular localization and nuclear envelope disintegration (PubMed:2188731). Phosphorylation by CDK1 at Ser-22 at the onset of mitosis drives lamin disassembly and nuclear envelope breakdown (By similarity).</text>
</comment>
<comment type="similarity">
    <text evidence="6">Belongs to the intermediate filament family.</text>
</comment>
<name>LMNB1_CHICK</name>